<protein>
    <recommendedName>
        <fullName evidence="1">Argininosuccinate lyase</fullName>
        <shortName evidence="1">ASAL</shortName>
        <ecNumber evidence="1">4.3.2.1</ecNumber>
    </recommendedName>
    <alternativeName>
        <fullName evidence="1">Arginosuccinase</fullName>
    </alternativeName>
</protein>
<dbReference type="EC" id="4.3.2.1" evidence="1"/>
<dbReference type="EMBL" id="AE017220">
    <property type="protein sequence ID" value="AAX67919.1"/>
    <property type="molecule type" value="Genomic_DNA"/>
</dbReference>
<dbReference type="RefSeq" id="WP_001230055.1">
    <property type="nucleotide sequence ID" value="NC_006905.1"/>
</dbReference>
<dbReference type="SMR" id="Q57H93"/>
<dbReference type="KEGG" id="sec:SCH_4013"/>
<dbReference type="HOGENOM" id="CLU_027272_2_3_6"/>
<dbReference type="UniPathway" id="UPA00068">
    <property type="reaction ID" value="UER00114"/>
</dbReference>
<dbReference type="Proteomes" id="UP000000538">
    <property type="component" value="Chromosome"/>
</dbReference>
<dbReference type="GO" id="GO:0005829">
    <property type="term" value="C:cytosol"/>
    <property type="evidence" value="ECO:0007669"/>
    <property type="project" value="TreeGrafter"/>
</dbReference>
<dbReference type="GO" id="GO:0004056">
    <property type="term" value="F:argininosuccinate lyase activity"/>
    <property type="evidence" value="ECO:0007669"/>
    <property type="project" value="UniProtKB-UniRule"/>
</dbReference>
<dbReference type="GO" id="GO:0042450">
    <property type="term" value="P:arginine biosynthetic process via ornithine"/>
    <property type="evidence" value="ECO:0007669"/>
    <property type="project" value="InterPro"/>
</dbReference>
<dbReference type="GO" id="GO:0006526">
    <property type="term" value="P:L-arginine biosynthetic process"/>
    <property type="evidence" value="ECO:0007669"/>
    <property type="project" value="UniProtKB-UniRule"/>
</dbReference>
<dbReference type="CDD" id="cd01359">
    <property type="entry name" value="Argininosuccinate_lyase"/>
    <property type="match status" value="1"/>
</dbReference>
<dbReference type="FunFam" id="1.10.275.10:FF:000004">
    <property type="entry name" value="Argininosuccinate lyase"/>
    <property type="match status" value="1"/>
</dbReference>
<dbReference type="FunFam" id="1.10.40.30:FF:000001">
    <property type="entry name" value="Argininosuccinate lyase"/>
    <property type="match status" value="1"/>
</dbReference>
<dbReference type="FunFam" id="1.20.200.10:FF:000006">
    <property type="entry name" value="Argininosuccinate lyase"/>
    <property type="match status" value="1"/>
</dbReference>
<dbReference type="Gene3D" id="1.10.40.30">
    <property type="entry name" value="Fumarase/aspartase (C-terminal domain)"/>
    <property type="match status" value="1"/>
</dbReference>
<dbReference type="Gene3D" id="1.20.200.10">
    <property type="entry name" value="Fumarase/aspartase (Central domain)"/>
    <property type="match status" value="1"/>
</dbReference>
<dbReference type="Gene3D" id="1.10.275.10">
    <property type="entry name" value="Fumarase/aspartase (N-terminal domain)"/>
    <property type="match status" value="1"/>
</dbReference>
<dbReference type="HAMAP" id="MF_00006">
    <property type="entry name" value="Arg_succ_lyase"/>
    <property type="match status" value="1"/>
</dbReference>
<dbReference type="InterPro" id="IPR029419">
    <property type="entry name" value="Arg_succ_lyase_C"/>
</dbReference>
<dbReference type="InterPro" id="IPR009049">
    <property type="entry name" value="Argininosuccinate_lyase"/>
</dbReference>
<dbReference type="InterPro" id="IPR024083">
    <property type="entry name" value="Fumarase/histidase_N"/>
</dbReference>
<dbReference type="InterPro" id="IPR020557">
    <property type="entry name" value="Fumarate_lyase_CS"/>
</dbReference>
<dbReference type="InterPro" id="IPR000362">
    <property type="entry name" value="Fumarate_lyase_fam"/>
</dbReference>
<dbReference type="InterPro" id="IPR022761">
    <property type="entry name" value="Fumarate_lyase_N"/>
</dbReference>
<dbReference type="InterPro" id="IPR008948">
    <property type="entry name" value="L-Aspartase-like"/>
</dbReference>
<dbReference type="NCBIfam" id="TIGR00838">
    <property type="entry name" value="argH"/>
    <property type="match status" value="1"/>
</dbReference>
<dbReference type="NCBIfam" id="NF008964">
    <property type="entry name" value="PRK12308.1"/>
    <property type="match status" value="1"/>
</dbReference>
<dbReference type="PANTHER" id="PTHR43814">
    <property type="entry name" value="ARGININOSUCCINATE LYASE"/>
    <property type="match status" value="1"/>
</dbReference>
<dbReference type="PANTHER" id="PTHR43814:SF1">
    <property type="entry name" value="ARGININOSUCCINATE LYASE"/>
    <property type="match status" value="1"/>
</dbReference>
<dbReference type="Pfam" id="PF14698">
    <property type="entry name" value="ASL_C2"/>
    <property type="match status" value="1"/>
</dbReference>
<dbReference type="Pfam" id="PF00206">
    <property type="entry name" value="Lyase_1"/>
    <property type="match status" value="1"/>
</dbReference>
<dbReference type="PRINTS" id="PR00145">
    <property type="entry name" value="ARGSUCLYASE"/>
</dbReference>
<dbReference type="PRINTS" id="PR00149">
    <property type="entry name" value="FUMRATELYASE"/>
</dbReference>
<dbReference type="SUPFAM" id="SSF48557">
    <property type="entry name" value="L-aspartase-like"/>
    <property type="match status" value="1"/>
</dbReference>
<dbReference type="PROSITE" id="PS00163">
    <property type="entry name" value="FUMARATE_LYASES"/>
    <property type="match status" value="1"/>
</dbReference>
<organism>
    <name type="scientific">Salmonella choleraesuis (strain SC-B67)</name>
    <dbReference type="NCBI Taxonomy" id="321314"/>
    <lineage>
        <taxon>Bacteria</taxon>
        <taxon>Pseudomonadati</taxon>
        <taxon>Pseudomonadota</taxon>
        <taxon>Gammaproteobacteria</taxon>
        <taxon>Enterobacterales</taxon>
        <taxon>Enterobacteriaceae</taxon>
        <taxon>Salmonella</taxon>
    </lineage>
</organism>
<sequence length="458" mass="50497">MALWGGRFTQAADQRFKQFNDSLRFDYRLAEQDIVGSVAWSKALVTVGVLTADEQRQLEEALNVLLEEVRANPQQILQSDAEDIHSWVEGKLIDKVGQLGKKLHTGRSRNDQVATDLKLWCKETVRELLTANRQLQSALVETAQANQDAVMPGYTHLQRAQPVTFAHWCLAYVEMLARDESRLQDTLKRLDVSPLGCGALAGTAYEIDREQLAGWLGFTSATRNSLDSVSDRDHVLELLSDAAIGMVHLSRFAEDLIFFNSGEAGFVELSDRVTSGSSLMPQKKNPDALELIRGKCGRVQGALTGMMMTLKGLPLAYNKDMQEDKEGLFDALDTWLDCLHMAALVLDGIQVKRPRCQDAAQQGYANATELADYLVAKGVPFREAHHIVGEAVVEAIRQGKPLEALPLADLQKFSRVIGDDVYPILSLQSCLDKRAAKGGVSPQQVAQAINDAKARLAL</sequence>
<keyword id="KW-0028">Amino-acid biosynthesis</keyword>
<keyword id="KW-0055">Arginine biosynthesis</keyword>
<keyword id="KW-0963">Cytoplasm</keyword>
<keyword id="KW-0456">Lyase</keyword>
<comment type="catalytic activity">
    <reaction evidence="1">
        <text>2-(N(omega)-L-arginino)succinate = fumarate + L-arginine</text>
        <dbReference type="Rhea" id="RHEA:24020"/>
        <dbReference type="ChEBI" id="CHEBI:29806"/>
        <dbReference type="ChEBI" id="CHEBI:32682"/>
        <dbReference type="ChEBI" id="CHEBI:57472"/>
        <dbReference type="EC" id="4.3.2.1"/>
    </reaction>
</comment>
<comment type="pathway">
    <text evidence="1">Amino-acid biosynthesis; L-arginine biosynthesis; L-arginine from L-ornithine and carbamoyl phosphate: step 3/3.</text>
</comment>
<comment type="subcellular location">
    <subcellularLocation>
        <location evidence="1">Cytoplasm</location>
    </subcellularLocation>
</comment>
<comment type="similarity">
    <text evidence="1">Belongs to the lyase 1 family. Argininosuccinate lyase subfamily.</text>
</comment>
<name>ARLY_SALCH</name>
<gene>
    <name evidence="1" type="primary">argH</name>
    <name type="ordered locus">SCH_4013</name>
</gene>
<evidence type="ECO:0000255" key="1">
    <source>
        <dbReference type="HAMAP-Rule" id="MF_00006"/>
    </source>
</evidence>
<proteinExistence type="inferred from homology"/>
<feature type="chain" id="PRO_0000240766" description="Argininosuccinate lyase">
    <location>
        <begin position="1"/>
        <end position="458"/>
    </location>
</feature>
<accession>Q57H93</accession>
<reference key="1">
    <citation type="journal article" date="2005" name="Nucleic Acids Res.">
        <title>The genome sequence of Salmonella enterica serovar Choleraesuis, a highly invasive and resistant zoonotic pathogen.</title>
        <authorList>
            <person name="Chiu C.-H."/>
            <person name="Tang P."/>
            <person name="Chu C."/>
            <person name="Hu S."/>
            <person name="Bao Q."/>
            <person name="Yu J."/>
            <person name="Chou Y.-Y."/>
            <person name="Wang H.-S."/>
            <person name="Lee Y.-S."/>
        </authorList>
    </citation>
    <scope>NUCLEOTIDE SEQUENCE [LARGE SCALE GENOMIC DNA]</scope>
    <source>
        <strain>SC-B67</strain>
    </source>
</reference>